<proteinExistence type="inferred from homology"/>
<protein>
    <recommendedName>
        <fullName evidence="1">A-type ATP synthase subunit A</fullName>
        <ecNumber evidence="1">7.1.2.2</ecNumber>
    </recommendedName>
</protein>
<dbReference type="EC" id="7.1.2.2" evidence="1"/>
<dbReference type="EMBL" id="CP001402">
    <property type="protein sequence ID" value="ACR42164.1"/>
    <property type="molecule type" value="Genomic_DNA"/>
</dbReference>
<dbReference type="RefSeq" id="WP_012711559.1">
    <property type="nucleotide sequence ID" value="NC_012726.1"/>
</dbReference>
<dbReference type="SMR" id="C4KHV0"/>
<dbReference type="KEGG" id="sid:M164_1563"/>
<dbReference type="HOGENOM" id="CLU_008162_3_1_2"/>
<dbReference type="Proteomes" id="UP000001479">
    <property type="component" value="Chromosome"/>
</dbReference>
<dbReference type="GO" id="GO:0005886">
    <property type="term" value="C:plasma membrane"/>
    <property type="evidence" value="ECO:0007669"/>
    <property type="project" value="UniProtKB-SubCell"/>
</dbReference>
<dbReference type="GO" id="GO:0033178">
    <property type="term" value="C:proton-transporting two-sector ATPase complex, catalytic domain"/>
    <property type="evidence" value="ECO:0007669"/>
    <property type="project" value="InterPro"/>
</dbReference>
<dbReference type="GO" id="GO:0005524">
    <property type="term" value="F:ATP binding"/>
    <property type="evidence" value="ECO:0007669"/>
    <property type="project" value="UniProtKB-UniRule"/>
</dbReference>
<dbReference type="GO" id="GO:0016887">
    <property type="term" value="F:ATP hydrolysis activity"/>
    <property type="evidence" value="ECO:0007669"/>
    <property type="project" value="InterPro"/>
</dbReference>
<dbReference type="GO" id="GO:0046933">
    <property type="term" value="F:proton-transporting ATP synthase activity, rotational mechanism"/>
    <property type="evidence" value="ECO:0007669"/>
    <property type="project" value="UniProtKB-UniRule"/>
</dbReference>
<dbReference type="GO" id="GO:0046961">
    <property type="term" value="F:proton-transporting ATPase activity, rotational mechanism"/>
    <property type="evidence" value="ECO:0007669"/>
    <property type="project" value="InterPro"/>
</dbReference>
<dbReference type="GO" id="GO:0042777">
    <property type="term" value="P:proton motive force-driven plasma membrane ATP synthesis"/>
    <property type="evidence" value="ECO:0007669"/>
    <property type="project" value="UniProtKB-UniRule"/>
</dbReference>
<dbReference type="CDD" id="cd18111">
    <property type="entry name" value="ATP-synt_V_A-type_alpha_C"/>
    <property type="match status" value="1"/>
</dbReference>
<dbReference type="CDD" id="cd18119">
    <property type="entry name" value="ATP-synt_V_A-type_alpha_N"/>
    <property type="match status" value="1"/>
</dbReference>
<dbReference type="CDD" id="cd01134">
    <property type="entry name" value="V_A-ATPase_A"/>
    <property type="match status" value="1"/>
</dbReference>
<dbReference type="FunFam" id="1.10.1140.10:FF:000002">
    <property type="entry name" value="V-type proton ATPase catalytic subunit A"/>
    <property type="match status" value="1"/>
</dbReference>
<dbReference type="FunFam" id="2.40.30.20:FF:000002">
    <property type="entry name" value="V-type proton ATPase catalytic subunit A"/>
    <property type="match status" value="1"/>
</dbReference>
<dbReference type="FunFam" id="2.40.50.100:FF:000008">
    <property type="entry name" value="V-type proton ATPase catalytic subunit A"/>
    <property type="match status" value="1"/>
</dbReference>
<dbReference type="Gene3D" id="2.40.30.20">
    <property type="match status" value="1"/>
</dbReference>
<dbReference type="Gene3D" id="2.40.50.100">
    <property type="match status" value="1"/>
</dbReference>
<dbReference type="Gene3D" id="1.10.1140.10">
    <property type="entry name" value="Bovine Mitochondrial F1-atpase, Atp Synthase Beta Chain, Chain D, domain 3"/>
    <property type="match status" value="1"/>
</dbReference>
<dbReference type="Gene3D" id="3.40.50.300">
    <property type="entry name" value="P-loop containing nucleotide triphosphate hydrolases"/>
    <property type="match status" value="1"/>
</dbReference>
<dbReference type="HAMAP" id="MF_00309">
    <property type="entry name" value="ATP_synth_A_arch"/>
    <property type="match status" value="1"/>
</dbReference>
<dbReference type="InterPro" id="IPR003593">
    <property type="entry name" value="AAA+_ATPase"/>
</dbReference>
<dbReference type="InterPro" id="IPR055190">
    <property type="entry name" value="ATP-synt_VA_C"/>
</dbReference>
<dbReference type="InterPro" id="IPR031686">
    <property type="entry name" value="ATP-synth_a_Xtn"/>
</dbReference>
<dbReference type="InterPro" id="IPR023366">
    <property type="entry name" value="ATP_synth_asu-like_sf"/>
</dbReference>
<dbReference type="InterPro" id="IPR005726">
    <property type="entry name" value="ATP_synth_asu_arc"/>
</dbReference>
<dbReference type="InterPro" id="IPR004100">
    <property type="entry name" value="ATPase_F1/V1/A1_a/bsu_N"/>
</dbReference>
<dbReference type="InterPro" id="IPR036121">
    <property type="entry name" value="ATPase_F1/V1/A1_a/bsu_N_sf"/>
</dbReference>
<dbReference type="InterPro" id="IPR000194">
    <property type="entry name" value="ATPase_F1/V1/A1_a/bsu_nucl-bd"/>
</dbReference>
<dbReference type="InterPro" id="IPR024034">
    <property type="entry name" value="ATPase_F1/V1_b/a_C"/>
</dbReference>
<dbReference type="InterPro" id="IPR027417">
    <property type="entry name" value="P-loop_NTPase"/>
</dbReference>
<dbReference type="InterPro" id="IPR022878">
    <property type="entry name" value="V-ATPase_asu"/>
</dbReference>
<dbReference type="NCBIfam" id="TIGR01043">
    <property type="entry name" value="ATP_syn_A_arch"/>
    <property type="match status" value="1"/>
</dbReference>
<dbReference type="NCBIfam" id="NF003220">
    <property type="entry name" value="PRK04192.1"/>
    <property type="match status" value="1"/>
</dbReference>
<dbReference type="PANTHER" id="PTHR43607:SF1">
    <property type="entry name" value="H(+)-TRANSPORTING TWO-SECTOR ATPASE"/>
    <property type="match status" value="1"/>
</dbReference>
<dbReference type="PANTHER" id="PTHR43607">
    <property type="entry name" value="V-TYPE PROTON ATPASE CATALYTIC SUBUNIT A"/>
    <property type="match status" value="1"/>
</dbReference>
<dbReference type="Pfam" id="PF00006">
    <property type="entry name" value="ATP-synt_ab"/>
    <property type="match status" value="1"/>
</dbReference>
<dbReference type="Pfam" id="PF02874">
    <property type="entry name" value="ATP-synt_ab_N"/>
    <property type="match status" value="1"/>
</dbReference>
<dbReference type="Pfam" id="PF16886">
    <property type="entry name" value="ATP-synt_ab_Xtn"/>
    <property type="match status" value="1"/>
</dbReference>
<dbReference type="Pfam" id="PF22919">
    <property type="entry name" value="ATP-synt_VA_C"/>
    <property type="match status" value="1"/>
</dbReference>
<dbReference type="SMART" id="SM00382">
    <property type="entry name" value="AAA"/>
    <property type="match status" value="1"/>
</dbReference>
<dbReference type="SUPFAM" id="SSF47917">
    <property type="entry name" value="C-terminal domain of alpha and beta subunits of F1 ATP synthase"/>
    <property type="match status" value="1"/>
</dbReference>
<dbReference type="SUPFAM" id="SSF50615">
    <property type="entry name" value="N-terminal domain of alpha and beta subunits of F1 ATP synthase"/>
    <property type="match status" value="1"/>
</dbReference>
<dbReference type="SUPFAM" id="SSF52540">
    <property type="entry name" value="P-loop containing nucleoside triphosphate hydrolases"/>
    <property type="match status" value="1"/>
</dbReference>
<evidence type="ECO:0000255" key="1">
    <source>
        <dbReference type="HAMAP-Rule" id="MF_00309"/>
    </source>
</evidence>
<comment type="function">
    <text evidence="1">Component of the A-type ATP synthase that produces ATP from ADP in the presence of a proton gradient across the membrane. The A chain is the catalytic subunit.</text>
</comment>
<comment type="catalytic activity">
    <reaction evidence="1">
        <text>ATP + H2O + 4 H(+)(in) = ADP + phosphate + 5 H(+)(out)</text>
        <dbReference type="Rhea" id="RHEA:57720"/>
        <dbReference type="ChEBI" id="CHEBI:15377"/>
        <dbReference type="ChEBI" id="CHEBI:15378"/>
        <dbReference type="ChEBI" id="CHEBI:30616"/>
        <dbReference type="ChEBI" id="CHEBI:43474"/>
        <dbReference type="ChEBI" id="CHEBI:456216"/>
        <dbReference type="EC" id="7.1.2.2"/>
    </reaction>
</comment>
<comment type="subunit">
    <text evidence="1">Has multiple subunits with at least A(3), B(3), C, D, E, F, H, I and proteolipid K(x).</text>
</comment>
<comment type="subcellular location">
    <subcellularLocation>
        <location evidence="1">Cell membrane</location>
        <topology evidence="1">Peripheral membrane protein</topology>
    </subcellularLocation>
</comment>
<comment type="similarity">
    <text evidence="1">Belongs to the ATPase alpha/beta chains family.</text>
</comment>
<name>AATA_SACI6</name>
<accession>C4KHV0</accession>
<keyword id="KW-0066">ATP synthesis</keyword>
<keyword id="KW-0067">ATP-binding</keyword>
<keyword id="KW-1003">Cell membrane</keyword>
<keyword id="KW-0375">Hydrogen ion transport</keyword>
<keyword id="KW-0406">Ion transport</keyword>
<keyword id="KW-0472">Membrane</keyword>
<keyword id="KW-0547">Nucleotide-binding</keyword>
<keyword id="KW-1278">Translocase</keyword>
<keyword id="KW-0813">Transport</keyword>
<sequence>MNNGRIVRINGPLVVADNMKNAQMYEVVEVGEPRLIGEITRIEGDRAFIQVYEDTSGIKPNEPVYRTGAPLSIELGPGLIGKIFDGLQRPLDSIKELTKSPFIARGIKVPSVDRKTKWHFIPKVKKGDKIEGGDIIGIVNETPLVEHRILVPPYVHGTLKEIVAEGDYTVEDPIAVVDMNGDEVPIKLMQRWPVRIPRPFKEKLEPTEPLLTGTRVLDTIFPIAKGGTAAIPGPFGSGKTVTLQSLAKWSAAKIVIYVGCGERGNEMTDELRQFPSLKDPWTGRPLLERTILVANTSNMPVAAREASIYVGITMAEYFRDQGYDTLLVADSTSRWAEALRDLGGRMEEMPAEEGFPSYLPSRLAEYYERAGRVKTVGKPERFGSVTVASAVSPPGGDFTEPVTSQTLRFVKVFWPLDVSLAQARHYPAINWLQGFSAYVDLVANWWNTNVDPKWREMRDMMVRTLIREDELRQIVRLVGPESLAEKDKLVLETARLIKEAFLKQNAYDDIDAFSSPQKQARVMRLIYLFNTHASRLVERGIPTKKIVDSMGQLLPEIIRSKAAIKNDELNKYDELERKLISVFENLEKEAGT</sequence>
<reference key="1">
    <citation type="journal article" date="2009" name="Proc. Natl. Acad. Sci. U.S.A.">
        <title>Biogeography of the Sulfolobus islandicus pan-genome.</title>
        <authorList>
            <person name="Reno M.L."/>
            <person name="Held N.L."/>
            <person name="Fields C.J."/>
            <person name="Burke P.V."/>
            <person name="Whitaker R.J."/>
        </authorList>
    </citation>
    <scope>NUCLEOTIDE SEQUENCE [LARGE SCALE GENOMIC DNA]</scope>
    <source>
        <strain>M.16.4 / Kamchatka #3</strain>
    </source>
</reference>
<gene>
    <name evidence="1" type="primary">atpA</name>
    <name type="ordered locus">M164_1563</name>
</gene>
<organism>
    <name type="scientific">Saccharolobus islandicus (strain M.16.4 / Kamchatka #3)</name>
    <name type="common">Sulfolobus islandicus</name>
    <dbReference type="NCBI Taxonomy" id="426118"/>
    <lineage>
        <taxon>Archaea</taxon>
        <taxon>Thermoproteota</taxon>
        <taxon>Thermoprotei</taxon>
        <taxon>Sulfolobales</taxon>
        <taxon>Sulfolobaceae</taxon>
        <taxon>Saccharolobus</taxon>
    </lineage>
</organism>
<feature type="chain" id="PRO_1000205033" description="A-type ATP synthase subunit A">
    <location>
        <begin position="1"/>
        <end position="592"/>
    </location>
</feature>
<feature type="binding site" evidence="1">
    <location>
        <begin position="233"/>
        <end position="240"/>
    </location>
    <ligand>
        <name>ATP</name>
        <dbReference type="ChEBI" id="CHEBI:30616"/>
    </ligand>
</feature>